<proteinExistence type="inferred from homology"/>
<comment type="similarity">
    <text evidence="1">Belongs to the UPF0435 family.</text>
</comment>
<reference key="1">
    <citation type="journal article" date="2011" name="J. Bacteriol.">
        <title>Genome sequence of lineage III Listeria monocytogenes strain HCC23.</title>
        <authorList>
            <person name="Steele C.L."/>
            <person name="Donaldson J.R."/>
            <person name="Paul D."/>
            <person name="Banes M.M."/>
            <person name="Arick T."/>
            <person name="Bridges S.M."/>
            <person name="Lawrence M.L."/>
        </authorList>
    </citation>
    <scope>NUCLEOTIDE SEQUENCE [LARGE SCALE GENOMIC DNA]</scope>
    <source>
        <strain>HCC23</strain>
    </source>
</reference>
<evidence type="ECO:0000255" key="1">
    <source>
        <dbReference type="HAMAP-Rule" id="MF_00829"/>
    </source>
</evidence>
<protein>
    <recommendedName>
        <fullName evidence="1">UPF0435 protein LMHCC_0855</fullName>
    </recommendedName>
</protein>
<accession>B8DFL4</accession>
<feature type="chain" id="PRO_1000148776" description="UPF0435 protein LMHCC_0855">
    <location>
        <begin position="1"/>
        <end position="73"/>
    </location>
</feature>
<dbReference type="EMBL" id="CP001175">
    <property type="protein sequence ID" value="ACK39207.1"/>
    <property type="molecule type" value="Genomic_DNA"/>
</dbReference>
<dbReference type="RefSeq" id="WP_003726640.1">
    <property type="nucleotide sequence ID" value="NC_011660.1"/>
</dbReference>
<dbReference type="SMR" id="B8DFL4"/>
<dbReference type="KEGG" id="lmh:LMHCC_0855"/>
<dbReference type="HOGENOM" id="CLU_199533_1_0_9"/>
<dbReference type="HAMAP" id="MF_00829">
    <property type="entry name" value="UPF0435"/>
    <property type="match status" value="1"/>
</dbReference>
<dbReference type="InterPro" id="IPR009507">
    <property type="entry name" value="UPF0435"/>
</dbReference>
<dbReference type="Pfam" id="PF06569">
    <property type="entry name" value="DUF1128"/>
    <property type="match status" value="1"/>
</dbReference>
<name>Y855_LISMH</name>
<sequence>MNLETPSQENLNFMLTEITTKLKMVNVGVFENLELDSVDYNALIDIYQLIKRKSNFSPREMQLFAEELRRIRK</sequence>
<organism>
    <name type="scientific">Listeria monocytogenes serotype 4a (strain HCC23)</name>
    <dbReference type="NCBI Taxonomy" id="552536"/>
    <lineage>
        <taxon>Bacteria</taxon>
        <taxon>Bacillati</taxon>
        <taxon>Bacillota</taxon>
        <taxon>Bacilli</taxon>
        <taxon>Bacillales</taxon>
        <taxon>Listeriaceae</taxon>
        <taxon>Listeria</taxon>
    </lineage>
</organism>
<gene>
    <name type="ordered locus">LMHCC_0855</name>
</gene>